<keyword id="KW-0067">ATP-binding</keyword>
<keyword id="KW-0131">Cell cycle</keyword>
<keyword id="KW-0132">Cell division</keyword>
<keyword id="KW-0133">Cell shape</keyword>
<keyword id="KW-0961">Cell wall biogenesis/degradation</keyword>
<keyword id="KW-0963">Cytoplasm</keyword>
<keyword id="KW-0436">Ligase</keyword>
<keyword id="KW-0547">Nucleotide-binding</keyword>
<keyword id="KW-0573">Peptidoglycan synthesis</keyword>
<organism>
    <name type="scientific">Staphylococcus aureus (strain Mu50 / ATCC 700699)</name>
    <dbReference type="NCBI Taxonomy" id="158878"/>
    <lineage>
        <taxon>Bacteria</taxon>
        <taxon>Bacillati</taxon>
        <taxon>Bacillota</taxon>
        <taxon>Bacilli</taxon>
        <taxon>Bacillales</taxon>
        <taxon>Staphylococcaceae</taxon>
        <taxon>Staphylococcus</taxon>
    </lineage>
</organism>
<feature type="chain" id="PRO_0000109087" description="UDP-N-acetylmuramoylalanine--D-glutamate ligase">
    <location>
        <begin position="1"/>
        <end position="449"/>
    </location>
</feature>
<feature type="binding site" evidence="2">
    <location>
        <begin position="118"/>
        <end position="124"/>
    </location>
    <ligand>
        <name>ATP</name>
        <dbReference type="ChEBI" id="CHEBI:30616"/>
    </ligand>
</feature>
<reference key="1">
    <citation type="journal article" date="2001" name="Lancet">
        <title>Whole genome sequencing of meticillin-resistant Staphylococcus aureus.</title>
        <authorList>
            <person name="Kuroda M."/>
            <person name="Ohta T."/>
            <person name="Uchiyama I."/>
            <person name="Baba T."/>
            <person name="Yuzawa H."/>
            <person name="Kobayashi I."/>
            <person name="Cui L."/>
            <person name="Oguchi A."/>
            <person name="Aoki K."/>
            <person name="Nagai Y."/>
            <person name="Lian J.-Q."/>
            <person name="Ito T."/>
            <person name="Kanamori M."/>
            <person name="Matsumaru H."/>
            <person name="Maruyama A."/>
            <person name="Murakami H."/>
            <person name="Hosoyama A."/>
            <person name="Mizutani-Ui Y."/>
            <person name="Takahashi N.K."/>
            <person name="Sawano T."/>
            <person name="Inoue R."/>
            <person name="Kaito C."/>
            <person name="Sekimizu K."/>
            <person name="Hirakawa H."/>
            <person name="Kuhara S."/>
            <person name="Goto S."/>
            <person name="Yabuzaki J."/>
            <person name="Kanehisa M."/>
            <person name="Yamashita A."/>
            <person name="Oshima K."/>
            <person name="Furuya K."/>
            <person name="Yoshino C."/>
            <person name="Shiba T."/>
            <person name="Hattori M."/>
            <person name="Ogasawara N."/>
            <person name="Hayashi H."/>
            <person name="Hiramatsu K."/>
        </authorList>
    </citation>
    <scope>NUCLEOTIDE SEQUENCE [LARGE SCALE GENOMIC DNA]</scope>
    <source>
        <strain>Mu50 / ATCC 700699</strain>
    </source>
</reference>
<sequence length="449" mass="49844">MLNYTGLENKNVLVVGLAKSGYEAAKLLSKLGANVTVNDGKDLSQDAHAKDLESMGISVVSGSHPLTLLDNNPIIVKNPGIPYTVSIIDEAVKRGLKILTEVELSYLISEAPIIAVTGTNGKTTVTSLIGDMFKKSRLTGRLSGNIGYVASKVAQEVKPTDYLVTELSSFQLLGIEKYKPHIAIITNIYSAHLDYHENLENYQNAKKQIYKNQTEEDYLICNYHQRQVIESEELKAKTLYFSTQQEVDGIYIKDGFIVYKGVRIINTEDLVLPGEHNLENILAAVLACILAGVPIKAIIDSLTTFSGIEHRLQYVGTNRTNKYYNDSKATNTLATQFALNSFNQPIIWLCGGLDRGNEFDELIPYMENVRAMVVFGQTKAKFAKLGNSQGKSVIEANNVEDAVDKVQDIIEPNDVVLLSPACASWDQYSTFEERGEKFIERFRAHLPSY</sequence>
<comment type="function">
    <text evidence="1">Cell wall formation. Catalyzes the addition of glutamate to the nucleotide precursor UDP-N-acetylmuramoyl-L-alanine (UMA).</text>
</comment>
<comment type="catalytic activity">
    <reaction>
        <text>UDP-N-acetyl-alpha-D-muramoyl-L-alanine + D-glutamate + ATP = UDP-N-acetyl-alpha-D-muramoyl-L-alanyl-D-glutamate + ADP + phosphate + H(+)</text>
        <dbReference type="Rhea" id="RHEA:16429"/>
        <dbReference type="ChEBI" id="CHEBI:15378"/>
        <dbReference type="ChEBI" id="CHEBI:29986"/>
        <dbReference type="ChEBI" id="CHEBI:30616"/>
        <dbReference type="ChEBI" id="CHEBI:43474"/>
        <dbReference type="ChEBI" id="CHEBI:83898"/>
        <dbReference type="ChEBI" id="CHEBI:83900"/>
        <dbReference type="ChEBI" id="CHEBI:456216"/>
        <dbReference type="EC" id="6.3.2.9"/>
    </reaction>
</comment>
<comment type="pathway">
    <text>Cell wall biogenesis; peptidoglycan biosynthesis.</text>
</comment>
<comment type="subcellular location">
    <subcellularLocation>
        <location evidence="1">Cytoplasm</location>
    </subcellularLocation>
</comment>
<comment type="similarity">
    <text evidence="3">Belongs to the MurCDEF family.</text>
</comment>
<evidence type="ECO:0000250" key="1"/>
<evidence type="ECO:0000255" key="2"/>
<evidence type="ECO:0000305" key="3"/>
<name>MURD_STAAM</name>
<proteinExistence type="inferred from homology"/>
<gene>
    <name type="primary">murD</name>
    <name type="ordered locus">SAV1183</name>
</gene>
<dbReference type="EC" id="6.3.2.9"/>
<dbReference type="EMBL" id="BA000017">
    <property type="protein sequence ID" value="BAB57345.1"/>
    <property type="molecule type" value="Genomic_DNA"/>
</dbReference>
<dbReference type="RefSeq" id="WP_000935991.1">
    <property type="nucleotide sequence ID" value="NC_002758.2"/>
</dbReference>
<dbReference type="SMR" id="P0A089"/>
<dbReference type="KEGG" id="sav:SAV1183"/>
<dbReference type="HOGENOM" id="CLU_032540_0_1_9"/>
<dbReference type="PhylomeDB" id="P0A089"/>
<dbReference type="UniPathway" id="UPA00219"/>
<dbReference type="Proteomes" id="UP000002481">
    <property type="component" value="Chromosome"/>
</dbReference>
<dbReference type="GO" id="GO:0005737">
    <property type="term" value="C:cytoplasm"/>
    <property type="evidence" value="ECO:0007669"/>
    <property type="project" value="UniProtKB-SubCell"/>
</dbReference>
<dbReference type="GO" id="GO:0005524">
    <property type="term" value="F:ATP binding"/>
    <property type="evidence" value="ECO:0007669"/>
    <property type="project" value="UniProtKB-UniRule"/>
</dbReference>
<dbReference type="GO" id="GO:0008764">
    <property type="term" value="F:UDP-N-acetylmuramoylalanine-D-glutamate ligase activity"/>
    <property type="evidence" value="ECO:0007669"/>
    <property type="project" value="UniProtKB-UniRule"/>
</dbReference>
<dbReference type="GO" id="GO:0051301">
    <property type="term" value="P:cell division"/>
    <property type="evidence" value="ECO:0007669"/>
    <property type="project" value="UniProtKB-KW"/>
</dbReference>
<dbReference type="GO" id="GO:0071555">
    <property type="term" value="P:cell wall organization"/>
    <property type="evidence" value="ECO:0007669"/>
    <property type="project" value="UniProtKB-KW"/>
</dbReference>
<dbReference type="GO" id="GO:0009252">
    <property type="term" value="P:peptidoglycan biosynthetic process"/>
    <property type="evidence" value="ECO:0007669"/>
    <property type="project" value="UniProtKB-UniRule"/>
</dbReference>
<dbReference type="GO" id="GO:0008360">
    <property type="term" value="P:regulation of cell shape"/>
    <property type="evidence" value="ECO:0007669"/>
    <property type="project" value="UniProtKB-KW"/>
</dbReference>
<dbReference type="Gene3D" id="3.90.190.20">
    <property type="entry name" value="Mur ligase, C-terminal domain"/>
    <property type="match status" value="1"/>
</dbReference>
<dbReference type="Gene3D" id="3.40.1190.10">
    <property type="entry name" value="Mur-like, catalytic domain"/>
    <property type="match status" value="1"/>
</dbReference>
<dbReference type="Gene3D" id="3.40.50.720">
    <property type="entry name" value="NAD(P)-binding Rossmann-like Domain"/>
    <property type="match status" value="1"/>
</dbReference>
<dbReference type="HAMAP" id="MF_00639">
    <property type="entry name" value="MurD"/>
    <property type="match status" value="1"/>
</dbReference>
<dbReference type="InterPro" id="IPR036565">
    <property type="entry name" value="Mur-like_cat_sf"/>
</dbReference>
<dbReference type="InterPro" id="IPR004101">
    <property type="entry name" value="Mur_ligase_C"/>
</dbReference>
<dbReference type="InterPro" id="IPR036615">
    <property type="entry name" value="Mur_ligase_C_dom_sf"/>
</dbReference>
<dbReference type="InterPro" id="IPR013221">
    <property type="entry name" value="Mur_ligase_cen"/>
</dbReference>
<dbReference type="InterPro" id="IPR005762">
    <property type="entry name" value="MurD"/>
</dbReference>
<dbReference type="NCBIfam" id="TIGR01087">
    <property type="entry name" value="murD"/>
    <property type="match status" value="1"/>
</dbReference>
<dbReference type="PANTHER" id="PTHR43692">
    <property type="entry name" value="UDP-N-ACETYLMURAMOYLALANINE--D-GLUTAMATE LIGASE"/>
    <property type="match status" value="1"/>
</dbReference>
<dbReference type="PANTHER" id="PTHR43692:SF1">
    <property type="entry name" value="UDP-N-ACETYLMURAMOYLALANINE--D-GLUTAMATE LIGASE"/>
    <property type="match status" value="1"/>
</dbReference>
<dbReference type="Pfam" id="PF02875">
    <property type="entry name" value="Mur_ligase_C"/>
    <property type="match status" value="1"/>
</dbReference>
<dbReference type="Pfam" id="PF08245">
    <property type="entry name" value="Mur_ligase_M"/>
    <property type="match status" value="1"/>
</dbReference>
<dbReference type="Pfam" id="PF21799">
    <property type="entry name" value="MurD-like_N"/>
    <property type="match status" value="1"/>
</dbReference>
<dbReference type="SUPFAM" id="SSF51984">
    <property type="entry name" value="MurCD N-terminal domain"/>
    <property type="match status" value="1"/>
</dbReference>
<dbReference type="SUPFAM" id="SSF53623">
    <property type="entry name" value="MurD-like peptide ligases, catalytic domain"/>
    <property type="match status" value="1"/>
</dbReference>
<dbReference type="SUPFAM" id="SSF53244">
    <property type="entry name" value="MurD-like peptide ligases, peptide-binding domain"/>
    <property type="match status" value="1"/>
</dbReference>
<accession>P0A089</accession>
<accession>O07323</accession>
<accession>O33595</accession>
<protein>
    <recommendedName>
        <fullName>UDP-N-acetylmuramoylalanine--D-glutamate ligase</fullName>
        <ecNumber>6.3.2.9</ecNumber>
    </recommendedName>
    <alternativeName>
        <fullName>D-glutamic acid-adding enzyme</fullName>
    </alternativeName>
    <alternativeName>
        <fullName>UDP-N-acetylmuramoyl-L-alanyl-D-glutamate synthetase</fullName>
    </alternativeName>
</protein>